<comment type="function">
    <text evidence="1">Thiol-specific peroxidase that catalyzes the reduction of hydrogen peroxide and organic hydroperoxides to water and alcohols, respectively. Plays a role in cell protection against oxidative stress by detoxifying peroxides.</text>
</comment>
<comment type="catalytic activity">
    <reaction evidence="1">
        <text>a hydroperoxide + [thioredoxin]-dithiol = an alcohol + [thioredoxin]-disulfide + H2O</text>
        <dbReference type="Rhea" id="RHEA:62620"/>
        <dbReference type="Rhea" id="RHEA-COMP:10698"/>
        <dbReference type="Rhea" id="RHEA-COMP:10700"/>
        <dbReference type="ChEBI" id="CHEBI:15377"/>
        <dbReference type="ChEBI" id="CHEBI:29950"/>
        <dbReference type="ChEBI" id="CHEBI:30879"/>
        <dbReference type="ChEBI" id="CHEBI:35924"/>
        <dbReference type="ChEBI" id="CHEBI:50058"/>
        <dbReference type="EC" id="1.11.1.24"/>
    </reaction>
</comment>
<comment type="subunit">
    <text evidence="1">Homodimer.</text>
</comment>
<comment type="miscellaneous">
    <text evidence="1">The active site is a conserved redox-active cysteine residue, the peroxidatic cysteine (C(P)), which makes the nucleophilic attack on the peroxide substrate. The peroxide oxidizes the C(P)-SH to cysteine sulfenic acid (C(P)-SOH), which then reacts with another cysteine residue, the resolving cysteine (C(R)), to form a disulfide bridge. The disulfide is subsequently reduced by an appropriate electron donor to complete the catalytic cycle. In this atypical 2-Cys peroxiredoxin, C(R) is present in the same subunit to form an intramolecular disulfide. The disulfide is subsequently reduced by thioredoxin.</text>
</comment>
<comment type="similarity">
    <text evidence="1">Belongs to the peroxiredoxin family. Tpx subfamily.</text>
</comment>
<comment type="sequence caution" evidence="2">
    <conflict type="erroneous initiation">
        <sequence resource="EMBL-CDS" id="AAD09977"/>
    </conflict>
</comment>
<comment type="sequence caution" evidence="2">
    <conflict type="erroneous initiation">
        <sequence resource="EMBL-CDS" id="AAL00299"/>
    </conflict>
</comment>
<protein>
    <recommendedName>
        <fullName evidence="1">Thiol peroxidase</fullName>
        <shortName evidence="1">Tpx</shortName>
        <ecNumber evidence="1">1.11.1.24</ecNumber>
    </recommendedName>
    <alternativeName>
        <fullName evidence="1">Peroxiredoxin tpx</fullName>
        <shortName evidence="1">Prx</shortName>
    </alternativeName>
    <alternativeName>
        <fullName evidence="1">Thioredoxin peroxidase</fullName>
    </alternativeName>
    <alternativeName>
        <fullName evidence="1">Thioredoxin-dependent peroxiredoxin</fullName>
    </alternativeName>
</protein>
<gene>
    <name evidence="1" type="primary">tpx</name>
    <name type="synonym">psaD</name>
    <name type="ordered locus">spr1495</name>
</gene>
<name>TPX_STRR6</name>
<dbReference type="EC" id="1.11.1.24" evidence="1"/>
<dbReference type="EMBL" id="AF055088">
    <property type="protein sequence ID" value="AAD09977.1"/>
    <property type="status" value="ALT_INIT"/>
    <property type="molecule type" value="Genomic_DNA"/>
</dbReference>
<dbReference type="EMBL" id="AE007317">
    <property type="protein sequence ID" value="AAL00299.1"/>
    <property type="status" value="ALT_INIT"/>
    <property type="molecule type" value="Genomic_DNA"/>
</dbReference>
<dbReference type="PIR" id="F98058">
    <property type="entry name" value="F98058"/>
</dbReference>
<dbReference type="RefSeq" id="NP_359088.2">
    <property type="nucleotide sequence ID" value="NC_003098.1"/>
</dbReference>
<dbReference type="RefSeq" id="WP_000256028.1">
    <property type="nucleotide sequence ID" value="NC_003098.1"/>
</dbReference>
<dbReference type="SMR" id="P0A4M6"/>
<dbReference type="STRING" id="171101.spr1495"/>
<dbReference type="GeneID" id="45653135"/>
<dbReference type="KEGG" id="spr:spr1495"/>
<dbReference type="PATRIC" id="fig|171101.6.peg.1614"/>
<dbReference type="eggNOG" id="COG2077">
    <property type="taxonomic scope" value="Bacteria"/>
</dbReference>
<dbReference type="HOGENOM" id="CLU_042529_12_0_9"/>
<dbReference type="Proteomes" id="UP000000586">
    <property type="component" value="Chromosome"/>
</dbReference>
<dbReference type="GO" id="GO:0008379">
    <property type="term" value="F:thioredoxin peroxidase activity"/>
    <property type="evidence" value="ECO:0007669"/>
    <property type="project" value="UniProtKB-UniRule"/>
</dbReference>
<dbReference type="CDD" id="cd03014">
    <property type="entry name" value="PRX_Atyp2cys"/>
    <property type="match status" value="1"/>
</dbReference>
<dbReference type="Gene3D" id="3.40.30.10">
    <property type="entry name" value="Glutaredoxin"/>
    <property type="match status" value="1"/>
</dbReference>
<dbReference type="HAMAP" id="MF_00269">
    <property type="entry name" value="Tpx"/>
    <property type="match status" value="1"/>
</dbReference>
<dbReference type="InterPro" id="IPR013740">
    <property type="entry name" value="Redoxin"/>
</dbReference>
<dbReference type="InterPro" id="IPR036249">
    <property type="entry name" value="Thioredoxin-like_sf"/>
</dbReference>
<dbReference type="InterPro" id="IPR013766">
    <property type="entry name" value="Thioredoxin_domain"/>
</dbReference>
<dbReference type="InterPro" id="IPR002065">
    <property type="entry name" value="TPX"/>
</dbReference>
<dbReference type="InterPro" id="IPR018219">
    <property type="entry name" value="Tpx_CS"/>
</dbReference>
<dbReference type="InterPro" id="IPR050455">
    <property type="entry name" value="Tpx_Peroxidase_subfamily"/>
</dbReference>
<dbReference type="NCBIfam" id="NF001808">
    <property type="entry name" value="PRK00522.1"/>
    <property type="match status" value="1"/>
</dbReference>
<dbReference type="PANTHER" id="PTHR43110">
    <property type="entry name" value="THIOL PEROXIDASE"/>
    <property type="match status" value="1"/>
</dbReference>
<dbReference type="PANTHER" id="PTHR43110:SF1">
    <property type="entry name" value="THIOL PEROXIDASE"/>
    <property type="match status" value="1"/>
</dbReference>
<dbReference type="Pfam" id="PF08534">
    <property type="entry name" value="Redoxin"/>
    <property type="match status" value="1"/>
</dbReference>
<dbReference type="SUPFAM" id="SSF52833">
    <property type="entry name" value="Thioredoxin-like"/>
    <property type="match status" value="1"/>
</dbReference>
<dbReference type="PROSITE" id="PS51352">
    <property type="entry name" value="THIOREDOXIN_2"/>
    <property type="match status" value="1"/>
</dbReference>
<dbReference type="PROSITE" id="PS01265">
    <property type="entry name" value="TPX"/>
    <property type="match status" value="1"/>
</dbReference>
<evidence type="ECO:0000255" key="1">
    <source>
        <dbReference type="HAMAP-Rule" id="MF_00269"/>
    </source>
</evidence>
<evidence type="ECO:0000305" key="2"/>
<organism>
    <name type="scientific">Streptococcus pneumoniae (strain ATCC BAA-255 / R6)</name>
    <dbReference type="NCBI Taxonomy" id="171101"/>
    <lineage>
        <taxon>Bacteria</taxon>
        <taxon>Bacillati</taxon>
        <taxon>Bacillota</taxon>
        <taxon>Bacilli</taxon>
        <taxon>Lactobacillales</taxon>
        <taxon>Streptococcaceae</taxon>
        <taxon>Streptococcus</taxon>
    </lineage>
</organism>
<sequence>MVTFLGNPVSFTGKQLQVGDKALDFSLTTTDLSKKSLADFDGKKKVLSVVPSIDTGICSTQTRRFNEELAGLDNTVVLTVSMDLPFAQKRWCGAEGLDNAIMLSDYFDHSFGRDYALLINEWHLLARAVFVLDTDNTIRYVEYVDNINSEPNFEAAIAAAKAL</sequence>
<reference key="1">
    <citation type="journal article" date="1998" name="Mol. Microbiol.">
        <title>Penicillin tolerance genes of Streptococcus pneumoniae: the ABC-type manganese permease complex Psa.</title>
        <authorList>
            <person name="Novak R."/>
            <person name="Braun J.S."/>
            <person name="Charpentier E."/>
            <person name="Tuomanen E."/>
        </authorList>
    </citation>
    <scope>NUCLEOTIDE SEQUENCE [GENOMIC DNA]</scope>
</reference>
<reference key="2">
    <citation type="journal article" date="2001" name="J. Bacteriol.">
        <title>Genome of the bacterium Streptococcus pneumoniae strain R6.</title>
        <authorList>
            <person name="Hoskins J."/>
            <person name="Alborn W.E. Jr."/>
            <person name="Arnold J."/>
            <person name="Blaszczak L.C."/>
            <person name="Burgett S."/>
            <person name="DeHoff B.S."/>
            <person name="Estrem S.T."/>
            <person name="Fritz L."/>
            <person name="Fu D.-J."/>
            <person name="Fuller W."/>
            <person name="Geringer C."/>
            <person name="Gilmour R."/>
            <person name="Glass J.S."/>
            <person name="Khoja H."/>
            <person name="Kraft A.R."/>
            <person name="Lagace R.E."/>
            <person name="LeBlanc D.J."/>
            <person name="Lee L.N."/>
            <person name="Lefkowitz E.J."/>
            <person name="Lu J."/>
            <person name="Matsushima P."/>
            <person name="McAhren S.M."/>
            <person name="McHenney M."/>
            <person name="McLeaster K."/>
            <person name="Mundy C.W."/>
            <person name="Nicas T.I."/>
            <person name="Norris F.H."/>
            <person name="O'Gara M."/>
            <person name="Peery R.B."/>
            <person name="Robertson G.T."/>
            <person name="Rockey P."/>
            <person name="Sun P.-M."/>
            <person name="Winkler M.E."/>
            <person name="Yang Y."/>
            <person name="Young-Bellido M."/>
            <person name="Zhao G."/>
            <person name="Zook C.A."/>
            <person name="Baltz R.H."/>
            <person name="Jaskunas S.R."/>
            <person name="Rosteck P.R. Jr."/>
            <person name="Skatrud P.L."/>
            <person name="Glass J.I."/>
        </authorList>
    </citation>
    <scope>NUCLEOTIDE SEQUENCE [LARGE SCALE GENOMIC DNA]</scope>
    <source>
        <strain>ATCC BAA-255 / R6</strain>
    </source>
</reference>
<keyword id="KW-0049">Antioxidant</keyword>
<keyword id="KW-1015">Disulfide bond</keyword>
<keyword id="KW-0560">Oxidoreductase</keyword>
<keyword id="KW-0575">Peroxidase</keyword>
<keyword id="KW-0676">Redox-active center</keyword>
<keyword id="KW-1185">Reference proteome</keyword>
<feature type="chain" id="PRO_0000187915" description="Thiol peroxidase">
    <location>
        <begin position="1"/>
        <end position="163"/>
    </location>
</feature>
<feature type="domain" description="Thioredoxin" evidence="1">
    <location>
        <begin position="16"/>
        <end position="162"/>
    </location>
</feature>
<feature type="active site" description="Cysteine sulfenic acid (-SOH) intermediate" evidence="1">
    <location>
        <position position="58"/>
    </location>
</feature>
<feature type="disulfide bond" description="Redox-active" evidence="1">
    <location>
        <begin position="58"/>
        <end position="92"/>
    </location>
</feature>
<accession>P0A4M6</accession>
<accession>P72500</accession>
<accession>Q9R6P4</accession>
<proteinExistence type="inferred from homology"/>